<feature type="chain" id="PRO_0000299547" description="TRAF3-interacting protein 1">
    <location>
        <begin position="1"/>
        <end position="629"/>
    </location>
</feature>
<feature type="region of interest" description="Disordered" evidence="4">
    <location>
        <begin position="130"/>
        <end position="511"/>
    </location>
</feature>
<feature type="coiled-coil region" evidence="3">
    <location>
        <begin position="220"/>
        <end position="282"/>
    </location>
</feature>
<feature type="coiled-coil region" evidence="3">
    <location>
        <begin position="511"/>
        <end position="602"/>
    </location>
</feature>
<feature type="compositionally biased region" description="Basic and acidic residues" evidence="4">
    <location>
        <begin position="145"/>
        <end position="306"/>
    </location>
</feature>
<feature type="compositionally biased region" description="Acidic residues" evidence="4">
    <location>
        <begin position="352"/>
        <end position="362"/>
    </location>
</feature>
<feature type="compositionally biased region" description="Low complexity" evidence="4">
    <location>
        <begin position="394"/>
        <end position="403"/>
    </location>
</feature>
<feature type="compositionally biased region" description="Basic and acidic residues" evidence="4">
    <location>
        <begin position="471"/>
        <end position="511"/>
    </location>
</feature>
<name>MIPT3_DANRE</name>
<dbReference type="EMBL" id="BC056776">
    <property type="protein sequence ID" value="AAH56776.1"/>
    <property type="molecule type" value="mRNA"/>
</dbReference>
<dbReference type="RefSeq" id="NP_956894.1">
    <property type="nucleotide sequence ID" value="NM_200600.1"/>
</dbReference>
<dbReference type="SMR" id="Q6PGZ3"/>
<dbReference type="FunCoup" id="Q6PGZ3">
    <property type="interactions" value="641"/>
</dbReference>
<dbReference type="STRING" id="7955.ENSDARP00000002437"/>
<dbReference type="PaxDb" id="7955-ENSDARP00000002437"/>
<dbReference type="GeneID" id="393572"/>
<dbReference type="KEGG" id="dre:393572"/>
<dbReference type="AGR" id="ZFIN:ZDB-GENE-040426-1146"/>
<dbReference type="CTD" id="26146"/>
<dbReference type="ZFIN" id="ZDB-GENE-040426-1146">
    <property type="gene designation" value="traf3ip1"/>
</dbReference>
<dbReference type="eggNOG" id="KOG3809">
    <property type="taxonomic scope" value="Eukaryota"/>
</dbReference>
<dbReference type="InParanoid" id="Q6PGZ3"/>
<dbReference type="OrthoDB" id="10258914at2759"/>
<dbReference type="PhylomeDB" id="Q6PGZ3"/>
<dbReference type="PRO" id="PR:Q6PGZ3"/>
<dbReference type="Proteomes" id="UP000000437">
    <property type="component" value="Chromosome 9"/>
</dbReference>
<dbReference type="GO" id="GO:0005930">
    <property type="term" value="C:axoneme"/>
    <property type="evidence" value="ECO:0000318"/>
    <property type="project" value="GO_Central"/>
</dbReference>
<dbReference type="GO" id="GO:0036064">
    <property type="term" value="C:ciliary basal body"/>
    <property type="evidence" value="ECO:0000318"/>
    <property type="project" value="GO_Central"/>
</dbReference>
<dbReference type="GO" id="GO:0005576">
    <property type="term" value="C:extracellular region"/>
    <property type="evidence" value="ECO:0007669"/>
    <property type="project" value="GOC"/>
</dbReference>
<dbReference type="GO" id="GO:0030992">
    <property type="term" value="C:intraciliary transport particle B"/>
    <property type="evidence" value="ECO:0000250"/>
    <property type="project" value="UniProtKB"/>
</dbReference>
<dbReference type="GO" id="GO:0008017">
    <property type="term" value="F:microtubule binding"/>
    <property type="evidence" value="ECO:0007669"/>
    <property type="project" value="InterPro"/>
</dbReference>
<dbReference type="GO" id="GO:0043010">
    <property type="term" value="P:camera-type eye development"/>
    <property type="evidence" value="ECO:0000315"/>
    <property type="project" value="ZFIN"/>
</dbReference>
<dbReference type="GO" id="GO:0021549">
    <property type="term" value="P:cerebellum development"/>
    <property type="evidence" value="ECO:0000315"/>
    <property type="project" value="ZFIN"/>
</dbReference>
<dbReference type="GO" id="GO:0090660">
    <property type="term" value="P:cerebrospinal fluid circulation"/>
    <property type="evidence" value="ECO:0000315"/>
    <property type="project" value="ZFIN"/>
</dbReference>
<dbReference type="GO" id="GO:0060271">
    <property type="term" value="P:cilium assembly"/>
    <property type="evidence" value="ECO:0000315"/>
    <property type="project" value="ZFIN"/>
</dbReference>
<dbReference type="GO" id="GO:0042073">
    <property type="term" value="P:intraciliary transport"/>
    <property type="evidence" value="ECO:0000318"/>
    <property type="project" value="GO_Central"/>
</dbReference>
<dbReference type="GO" id="GO:0035845">
    <property type="term" value="P:photoreceptor cell outer segment organization"/>
    <property type="evidence" value="ECO:0000315"/>
    <property type="project" value="ZFIN"/>
</dbReference>
<dbReference type="GO" id="GO:0048793">
    <property type="term" value="P:pronephros development"/>
    <property type="evidence" value="ECO:0000315"/>
    <property type="project" value="ZFIN"/>
</dbReference>
<dbReference type="GO" id="GO:0070507">
    <property type="term" value="P:regulation of microtubule cytoskeleton organization"/>
    <property type="evidence" value="ECO:0000315"/>
    <property type="project" value="UniProtKB"/>
</dbReference>
<dbReference type="GO" id="GO:0031113">
    <property type="term" value="P:regulation of microtubule polymerization"/>
    <property type="evidence" value="ECO:0000315"/>
    <property type="project" value="ZFIN"/>
</dbReference>
<dbReference type="FunFam" id="1.10.418.50:FF:000001">
    <property type="entry name" value="TRAF3-interacting protein 1 isoform X1"/>
    <property type="match status" value="1"/>
</dbReference>
<dbReference type="Gene3D" id="1.10.418.50">
    <property type="entry name" value="Microtubule-binding protein MIP-T3"/>
    <property type="match status" value="1"/>
</dbReference>
<dbReference type="InterPro" id="IPR018799">
    <property type="entry name" value="TRAF3IP1"/>
</dbReference>
<dbReference type="InterPro" id="IPR041476">
    <property type="entry name" value="TRAF3IP1_C"/>
</dbReference>
<dbReference type="InterPro" id="IPR040468">
    <property type="entry name" value="TRAF3IP1_N"/>
</dbReference>
<dbReference type="InterPro" id="IPR042576">
    <property type="entry name" value="TRAF3IP1_N_sf"/>
</dbReference>
<dbReference type="PANTHER" id="PTHR31363">
    <property type="entry name" value="TRAF3-INTERACTING PROTEIN 1"/>
    <property type="match status" value="1"/>
</dbReference>
<dbReference type="PANTHER" id="PTHR31363:SF0">
    <property type="entry name" value="TRAF3-INTERACTING PROTEIN 1"/>
    <property type="match status" value="1"/>
</dbReference>
<dbReference type="Pfam" id="PF10243">
    <property type="entry name" value="MIP-T3"/>
    <property type="match status" value="1"/>
</dbReference>
<dbReference type="Pfam" id="PF17749">
    <property type="entry name" value="MIP-T3_C"/>
    <property type="match status" value="1"/>
</dbReference>
<gene>
    <name type="primary">traf3ip1</name>
    <name type="ORF">zgc:63522</name>
</gene>
<sequence>MNESVAKKTQETLGKVIKKPPLTEKLLSKPPFRYLHDIFSEVIRTTGFMKGLYVEAEMKSDNVKDKDSKIAFLQKAIDVVMLVSGEPLAAKPARIVAGHEPEKTNELLQVIAKCCLNKLSSDEAVKRVLAGDKLDQKGKPSTSRSQDKENREGREHHRDREERKGIKESSGSREQKDPDQPKDQESKRDDKDRRRDAERSDKGRERERTKDRDRDKDKSRDREKDKTREKEREREKDRNREKERERDKDRDKKKERESHKDRERDKDREREKRREKEKDKERPRETEEKLKDRGDRKIKAAEEISKSKPQPEVASRTHQAETEEAESPSRIPRPSSAKGQRRKPKTGGQGTEQDETESEGEAEGPSAEKPIPLENGDVTDPAALQTTHSRRLPRPSSARPAAPRVKRQESYTDATPAERLGSGKTPASVILDGKKLSEDEDDEDGQFVVEEAAPPPSDVPEVESNSLELQGDDKHGGLVKKILETKKDYESSPSSKSKEQDRSLVSEASRKKERELVAREIERLRSSIQTVCRSALPLGKIMDYIQEDMDSMQNELQSWRKENKENAQALLQEQRITDGVVEPLKVELAELEQLIKDQQDKICAVKSNILKNEEKIQKMVSSISFSSQT</sequence>
<comment type="function">
    <text evidence="1 2 5">Plays an inhibitory role on IL13 signaling by binding to IL13RA1 and recruits TRAF3 and DISC1 to the microtubules. Involved in the regulation of microtubule cytoskeleton organization. Is a negative regulator of microtubule stability, acting through the control of MAP4 levels (PubMed:26487268). Involved in ciliogenesis (By similarity).</text>
</comment>
<comment type="subunit">
    <text evidence="1 2">Component of the IFT complex B, at least composed of ift20, ift22, ift25, ift27, ift46, ift52, traf3ip1/ift54, ift57, ift74, ift80, ift81, and ift88. Interacts with ift88 (By similarity). Interacts with il13ra1. Binds to microtubules, traf3 and disc1 (By similarity). Interacts with map4 (By similarity).</text>
</comment>
<comment type="subcellular location">
    <subcellularLocation>
        <location evidence="2">Cytoplasm</location>
        <location evidence="2">Cytoskeleton</location>
    </subcellularLocation>
    <subcellularLocation>
        <location evidence="2">Cell projection</location>
        <location evidence="2">Cilium</location>
    </subcellularLocation>
    <subcellularLocation>
        <location evidence="1">Cytoplasm</location>
        <location evidence="1">Cytoskeleton</location>
        <location evidence="1">Cilium axoneme</location>
    </subcellularLocation>
    <subcellularLocation>
        <location evidence="1">Cytoplasm</location>
        <location evidence="1">Cytoskeleton</location>
        <location evidence="1">Cilium basal body</location>
    </subcellularLocation>
    <text evidence="2">Microtubules. In the cilium, it is observed at the ciliary base, ciliary transition zone and ciliary tip.</text>
</comment>
<comment type="similarity">
    <text evidence="6">Belongs to the TRAF3IP1 family.</text>
</comment>
<reference key="1">
    <citation type="submission" date="2003-08" db="EMBL/GenBank/DDBJ databases">
        <authorList>
            <consortium name="NIH - Zebrafish Gene Collection (ZGC) project"/>
        </authorList>
    </citation>
    <scope>NUCLEOTIDE SEQUENCE [LARGE SCALE MRNA]</scope>
    <source>
        <strain>AB</strain>
    </source>
</reference>
<reference key="2">
    <citation type="journal article" date="2015" name="Nat. Commun.">
        <title>Mutations in TRAF3IP1/IFT54 reveal a new role for IFT proteins in microtubule stabilization.</title>
        <authorList>
            <person name="Bizet A.A."/>
            <person name="Becker-Heck A."/>
            <person name="Ryan R."/>
            <person name="Weber K."/>
            <person name="Filhol E."/>
            <person name="Krug P."/>
            <person name="Halbritter J."/>
            <person name="Delous M."/>
            <person name="Lasbennes M.C."/>
            <person name="Linghu B."/>
            <person name="Oakeley E.J."/>
            <person name="Zarhrate M."/>
            <person name="Nitschke P."/>
            <person name="Garfa-Traore M."/>
            <person name="Serluca F."/>
            <person name="Yang F."/>
            <person name="Bouwmeester T."/>
            <person name="Pinson L."/>
            <person name="Cassuto E."/>
            <person name="Dubot P."/>
            <person name="Elshakhs N.A."/>
            <person name="Sahel J.A."/>
            <person name="Salomon R."/>
            <person name="Drummond I.A."/>
            <person name="Gubler M.C."/>
            <person name="Antignac C."/>
            <person name="Chibout S."/>
            <person name="Szustakowski J.D."/>
            <person name="Hildebrandt F."/>
            <person name="Lorentzen E."/>
            <person name="Sailer A.W."/>
            <person name="Benmerah A."/>
            <person name="Saint-Mezard P."/>
            <person name="Saunier S."/>
        </authorList>
    </citation>
    <scope>FUNCTION</scope>
</reference>
<accession>Q6PGZ3</accession>
<proteinExistence type="evidence at transcript level"/>
<keyword id="KW-0966">Cell projection</keyword>
<keyword id="KW-0970">Cilium biogenesis/degradation</keyword>
<keyword id="KW-0175">Coiled coil</keyword>
<keyword id="KW-0963">Cytoplasm</keyword>
<keyword id="KW-0206">Cytoskeleton</keyword>
<keyword id="KW-1185">Reference proteome</keyword>
<protein>
    <recommendedName>
        <fullName>TRAF3-interacting protein 1</fullName>
    </recommendedName>
</protein>
<organism>
    <name type="scientific">Danio rerio</name>
    <name type="common">Zebrafish</name>
    <name type="synonym">Brachydanio rerio</name>
    <dbReference type="NCBI Taxonomy" id="7955"/>
    <lineage>
        <taxon>Eukaryota</taxon>
        <taxon>Metazoa</taxon>
        <taxon>Chordata</taxon>
        <taxon>Craniata</taxon>
        <taxon>Vertebrata</taxon>
        <taxon>Euteleostomi</taxon>
        <taxon>Actinopterygii</taxon>
        <taxon>Neopterygii</taxon>
        <taxon>Teleostei</taxon>
        <taxon>Ostariophysi</taxon>
        <taxon>Cypriniformes</taxon>
        <taxon>Danionidae</taxon>
        <taxon>Danioninae</taxon>
        <taxon>Danio</taxon>
    </lineage>
</organism>
<evidence type="ECO:0000250" key="1">
    <source>
        <dbReference type="UniProtKB" id="Q149C2"/>
    </source>
</evidence>
<evidence type="ECO:0000250" key="2">
    <source>
        <dbReference type="UniProtKB" id="Q8TDR0"/>
    </source>
</evidence>
<evidence type="ECO:0000255" key="3"/>
<evidence type="ECO:0000256" key="4">
    <source>
        <dbReference type="SAM" id="MobiDB-lite"/>
    </source>
</evidence>
<evidence type="ECO:0000269" key="5">
    <source>
    </source>
</evidence>
<evidence type="ECO:0000305" key="6"/>